<evidence type="ECO:0000255" key="1">
    <source>
        <dbReference type="HAMAP-Rule" id="MF_01225"/>
    </source>
</evidence>
<evidence type="ECO:0000255" key="2">
    <source>
        <dbReference type="PROSITE-ProRule" id="PRU01266"/>
    </source>
</evidence>
<accession>C1B1N5</accession>
<reference key="1">
    <citation type="submission" date="2009-03" db="EMBL/GenBank/DDBJ databases">
        <title>Comparison of the complete genome sequences of Rhodococcus erythropolis PR4 and Rhodococcus opacus B4.</title>
        <authorList>
            <person name="Takarada H."/>
            <person name="Sekine M."/>
            <person name="Hosoyama A."/>
            <person name="Yamada R."/>
            <person name="Fujisawa T."/>
            <person name="Omata S."/>
            <person name="Shimizu A."/>
            <person name="Tsukatani N."/>
            <person name="Tanikawa S."/>
            <person name="Fujita N."/>
            <person name="Harayama S."/>
        </authorList>
    </citation>
    <scope>NUCLEOTIDE SEQUENCE [LARGE SCALE GENOMIC DNA]</scope>
    <source>
        <strain>B4</strain>
    </source>
</reference>
<gene>
    <name evidence="1" type="primary">moaA</name>
    <name type="ordered locus">ROP_64830</name>
</gene>
<feature type="chain" id="PRO_1000164918" description="GTP 3',8-cyclase">
    <location>
        <begin position="1"/>
        <end position="351"/>
    </location>
</feature>
<feature type="domain" description="Radical SAM core" evidence="2">
    <location>
        <begin position="29"/>
        <end position="254"/>
    </location>
</feature>
<feature type="binding site" evidence="1">
    <location>
        <position position="38"/>
    </location>
    <ligand>
        <name>GTP</name>
        <dbReference type="ChEBI" id="CHEBI:37565"/>
    </ligand>
</feature>
<feature type="binding site" evidence="1">
    <location>
        <position position="45"/>
    </location>
    <ligand>
        <name>[4Fe-4S] cluster</name>
        <dbReference type="ChEBI" id="CHEBI:49883"/>
        <label>1</label>
        <note>4Fe-4S-S-AdoMet</note>
    </ligand>
</feature>
<feature type="binding site" evidence="1">
    <location>
        <position position="49"/>
    </location>
    <ligand>
        <name>[4Fe-4S] cluster</name>
        <dbReference type="ChEBI" id="CHEBI:49883"/>
        <label>1</label>
        <note>4Fe-4S-S-AdoMet</note>
    </ligand>
</feature>
<feature type="binding site" evidence="1">
    <location>
        <position position="51"/>
    </location>
    <ligand>
        <name>S-adenosyl-L-methionine</name>
        <dbReference type="ChEBI" id="CHEBI:59789"/>
    </ligand>
</feature>
<feature type="binding site" evidence="1">
    <location>
        <position position="52"/>
    </location>
    <ligand>
        <name>[4Fe-4S] cluster</name>
        <dbReference type="ChEBI" id="CHEBI:49883"/>
        <label>1</label>
        <note>4Fe-4S-S-AdoMet</note>
    </ligand>
</feature>
<feature type="binding site" evidence="1">
    <location>
        <position position="89"/>
    </location>
    <ligand>
        <name>GTP</name>
        <dbReference type="ChEBI" id="CHEBI:37565"/>
    </ligand>
</feature>
<feature type="binding site" evidence="1">
    <location>
        <position position="93"/>
    </location>
    <ligand>
        <name>S-adenosyl-L-methionine</name>
        <dbReference type="ChEBI" id="CHEBI:59789"/>
    </ligand>
</feature>
<feature type="binding site" evidence="1">
    <location>
        <position position="120"/>
    </location>
    <ligand>
        <name>GTP</name>
        <dbReference type="ChEBI" id="CHEBI:37565"/>
    </ligand>
</feature>
<feature type="binding site" evidence="1">
    <location>
        <position position="144"/>
    </location>
    <ligand>
        <name>S-adenosyl-L-methionine</name>
        <dbReference type="ChEBI" id="CHEBI:59789"/>
    </ligand>
</feature>
<feature type="binding site" evidence="1">
    <location>
        <position position="181"/>
    </location>
    <ligand>
        <name>GTP</name>
        <dbReference type="ChEBI" id="CHEBI:37565"/>
    </ligand>
</feature>
<feature type="binding site" evidence="1">
    <location>
        <position position="214"/>
    </location>
    <ligand>
        <name>S-adenosyl-L-methionine</name>
        <dbReference type="ChEBI" id="CHEBI:59789"/>
    </ligand>
</feature>
<feature type="binding site" evidence="1">
    <location>
        <position position="278"/>
    </location>
    <ligand>
        <name>[4Fe-4S] cluster</name>
        <dbReference type="ChEBI" id="CHEBI:49883"/>
        <label>2</label>
        <note>4Fe-4S-substrate</note>
    </ligand>
</feature>
<feature type="binding site" evidence="1">
    <location>
        <position position="281"/>
    </location>
    <ligand>
        <name>[4Fe-4S] cluster</name>
        <dbReference type="ChEBI" id="CHEBI:49883"/>
        <label>2</label>
        <note>4Fe-4S-substrate</note>
    </ligand>
</feature>
<feature type="binding site" evidence="1">
    <location>
        <begin position="283"/>
        <end position="285"/>
    </location>
    <ligand>
        <name>GTP</name>
        <dbReference type="ChEBI" id="CHEBI:37565"/>
    </ligand>
</feature>
<feature type="binding site" evidence="1">
    <location>
        <position position="295"/>
    </location>
    <ligand>
        <name>[4Fe-4S] cluster</name>
        <dbReference type="ChEBI" id="CHEBI:49883"/>
        <label>2</label>
        <note>4Fe-4S-substrate</note>
    </ligand>
</feature>
<keyword id="KW-0004">4Fe-4S</keyword>
<keyword id="KW-0342">GTP-binding</keyword>
<keyword id="KW-0408">Iron</keyword>
<keyword id="KW-0411">Iron-sulfur</keyword>
<keyword id="KW-0456">Lyase</keyword>
<keyword id="KW-0479">Metal-binding</keyword>
<keyword id="KW-0501">Molybdenum cofactor biosynthesis</keyword>
<keyword id="KW-0547">Nucleotide-binding</keyword>
<keyword id="KW-0949">S-adenosyl-L-methionine</keyword>
<organism>
    <name type="scientific">Rhodococcus opacus (strain B4)</name>
    <dbReference type="NCBI Taxonomy" id="632772"/>
    <lineage>
        <taxon>Bacteria</taxon>
        <taxon>Bacillati</taxon>
        <taxon>Actinomycetota</taxon>
        <taxon>Actinomycetes</taxon>
        <taxon>Mycobacteriales</taxon>
        <taxon>Nocardiaceae</taxon>
        <taxon>Rhodococcus</taxon>
    </lineage>
</organism>
<dbReference type="EC" id="4.1.99.22" evidence="1"/>
<dbReference type="EMBL" id="AP011115">
    <property type="protein sequence ID" value="BAH54730.1"/>
    <property type="molecule type" value="Genomic_DNA"/>
</dbReference>
<dbReference type="RefSeq" id="WP_015890180.1">
    <property type="nucleotide sequence ID" value="NC_012522.1"/>
</dbReference>
<dbReference type="SMR" id="C1B1N5"/>
<dbReference type="STRING" id="632772.ROP_64830"/>
<dbReference type="KEGG" id="rop:ROP_64830"/>
<dbReference type="PATRIC" id="fig|632772.20.peg.6767"/>
<dbReference type="HOGENOM" id="CLU_009273_0_1_11"/>
<dbReference type="OrthoDB" id="9763993at2"/>
<dbReference type="UniPathway" id="UPA00344"/>
<dbReference type="Proteomes" id="UP000002212">
    <property type="component" value="Chromosome"/>
</dbReference>
<dbReference type="GO" id="GO:0051539">
    <property type="term" value="F:4 iron, 4 sulfur cluster binding"/>
    <property type="evidence" value="ECO:0007669"/>
    <property type="project" value="UniProtKB-UniRule"/>
</dbReference>
<dbReference type="GO" id="GO:0061799">
    <property type="term" value="F:cyclic pyranopterin monophosphate synthase activity"/>
    <property type="evidence" value="ECO:0007669"/>
    <property type="project" value="TreeGrafter"/>
</dbReference>
<dbReference type="GO" id="GO:0061798">
    <property type="term" value="F:GTP 3',8'-cyclase activity"/>
    <property type="evidence" value="ECO:0007669"/>
    <property type="project" value="UniProtKB-UniRule"/>
</dbReference>
<dbReference type="GO" id="GO:0005525">
    <property type="term" value="F:GTP binding"/>
    <property type="evidence" value="ECO:0007669"/>
    <property type="project" value="UniProtKB-UniRule"/>
</dbReference>
<dbReference type="GO" id="GO:0046872">
    <property type="term" value="F:metal ion binding"/>
    <property type="evidence" value="ECO:0007669"/>
    <property type="project" value="UniProtKB-KW"/>
</dbReference>
<dbReference type="GO" id="GO:1904047">
    <property type="term" value="F:S-adenosyl-L-methionine binding"/>
    <property type="evidence" value="ECO:0007669"/>
    <property type="project" value="UniProtKB-UniRule"/>
</dbReference>
<dbReference type="GO" id="GO:0006777">
    <property type="term" value="P:Mo-molybdopterin cofactor biosynthetic process"/>
    <property type="evidence" value="ECO:0007669"/>
    <property type="project" value="UniProtKB-UniRule"/>
</dbReference>
<dbReference type="CDD" id="cd01335">
    <property type="entry name" value="Radical_SAM"/>
    <property type="match status" value="1"/>
</dbReference>
<dbReference type="CDD" id="cd21117">
    <property type="entry name" value="Twitch_MoaA"/>
    <property type="match status" value="1"/>
</dbReference>
<dbReference type="Gene3D" id="3.20.20.70">
    <property type="entry name" value="Aldolase class I"/>
    <property type="match status" value="1"/>
</dbReference>
<dbReference type="HAMAP" id="MF_01225_B">
    <property type="entry name" value="MoaA_B"/>
    <property type="match status" value="1"/>
</dbReference>
<dbReference type="InterPro" id="IPR013785">
    <property type="entry name" value="Aldolase_TIM"/>
</dbReference>
<dbReference type="InterPro" id="IPR006638">
    <property type="entry name" value="Elp3/MiaA/NifB-like_rSAM"/>
</dbReference>
<dbReference type="InterPro" id="IPR013483">
    <property type="entry name" value="MoaA"/>
</dbReference>
<dbReference type="InterPro" id="IPR010505">
    <property type="entry name" value="MoaA_twitch"/>
</dbReference>
<dbReference type="InterPro" id="IPR050105">
    <property type="entry name" value="MoCo_biosynth_MoaA/MoaC"/>
</dbReference>
<dbReference type="InterPro" id="IPR007197">
    <property type="entry name" value="rSAM"/>
</dbReference>
<dbReference type="NCBIfam" id="TIGR02666">
    <property type="entry name" value="moaA"/>
    <property type="match status" value="1"/>
</dbReference>
<dbReference type="PANTHER" id="PTHR22960:SF0">
    <property type="entry name" value="MOLYBDENUM COFACTOR BIOSYNTHESIS PROTEIN 1"/>
    <property type="match status" value="1"/>
</dbReference>
<dbReference type="PANTHER" id="PTHR22960">
    <property type="entry name" value="MOLYBDOPTERIN COFACTOR SYNTHESIS PROTEIN A"/>
    <property type="match status" value="1"/>
</dbReference>
<dbReference type="Pfam" id="PF06463">
    <property type="entry name" value="Mob_synth_C"/>
    <property type="match status" value="1"/>
</dbReference>
<dbReference type="Pfam" id="PF04055">
    <property type="entry name" value="Radical_SAM"/>
    <property type="match status" value="1"/>
</dbReference>
<dbReference type="SFLD" id="SFLDG01383">
    <property type="entry name" value="cyclic_pyranopterin_phosphate"/>
    <property type="match status" value="1"/>
</dbReference>
<dbReference type="SFLD" id="SFLDG01386">
    <property type="entry name" value="main_SPASM_domain-containing"/>
    <property type="match status" value="1"/>
</dbReference>
<dbReference type="SMART" id="SM00729">
    <property type="entry name" value="Elp3"/>
    <property type="match status" value="1"/>
</dbReference>
<dbReference type="SUPFAM" id="SSF102114">
    <property type="entry name" value="Radical SAM enzymes"/>
    <property type="match status" value="1"/>
</dbReference>
<dbReference type="PROSITE" id="PS51918">
    <property type="entry name" value="RADICAL_SAM"/>
    <property type="match status" value="1"/>
</dbReference>
<sequence length="351" mass="38302">MTTVEMGIPTVRRSVSLAGRPDVDHLVDRFGRVARDLRVSITEKCSLRCTYCMPEEGLPAIPAQNLLTASEIVRLVDIAVHRLGVREVRFTGGEPLMRVDLEQMIAGCAERVPGVPLAMTTNAVGLEHRADGLARAGLTRVNVSLDSVDREHFARLTRRDRLPSVMAGIRAAARAGLAPMKINAVLMPETLSGAADLLEWCLREGVTLRFIEEMPLDADHEWARENMVTADRLLAVLGERFTLTEHGREDPSAPAEEWLVDGGPATVGIIASVTRSFCSDCDRTRLTAEGTVRSCLFSDQEIDLRSALRSGADDEELAQLWRGAMWNKWAGHGINADGFAPPQRSMGAIGG</sequence>
<proteinExistence type="inferred from homology"/>
<protein>
    <recommendedName>
        <fullName evidence="1">GTP 3',8-cyclase</fullName>
        <ecNumber evidence="1">4.1.99.22</ecNumber>
    </recommendedName>
    <alternativeName>
        <fullName evidence="1">Molybdenum cofactor biosynthesis protein A</fullName>
    </alternativeName>
</protein>
<name>MOAA_RHOOB</name>
<comment type="function">
    <text evidence="1">Catalyzes the cyclization of GTP to (8S)-3',8-cyclo-7,8-dihydroguanosine 5'-triphosphate.</text>
</comment>
<comment type="catalytic activity">
    <reaction evidence="1">
        <text>GTP + AH2 + S-adenosyl-L-methionine = (8S)-3',8-cyclo-7,8-dihydroguanosine 5'-triphosphate + 5'-deoxyadenosine + L-methionine + A + H(+)</text>
        <dbReference type="Rhea" id="RHEA:49576"/>
        <dbReference type="ChEBI" id="CHEBI:13193"/>
        <dbReference type="ChEBI" id="CHEBI:15378"/>
        <dbReference type="ChEBI" id="CHEBI:17319"/>
        <dbReference type="ChEBI" id="CHEBI:17499"/>
        <dbReference type="ChEBI" id="CHEBI:37565"/>
        <dbReference type="ChEBI" id="CHEBI:57844"/>
        <dbReference type="ChEBI" id="CHEBI:59789"/>
        <dbReference type="ChEBI" id="CHEBI:131766"/>
        <dbReference type="EC" id="4.1.99.22"/>
    </reaction>
</comment>
<comment type="cofactor">
    <cofactor evidence="1">
        <name>[4Fe-4S] cluster</name>
        <dbReference type="ChEBI" id="CHEBI:49883"/>
    </cofactor>
    <text evidence="1">Binds 2 [4Fe-4S] clusters. Binds 1 [4Fe-4S] cluster coordinated with 3 cysteines and an exchangeable S-adenosyl-L-methionine and 1 [4Fe-4S] cluster coordinated with 3 cysteines and the GTP-derived substrate.</text>
</comment>
<comment type="pathway">
    <text evidence="1">Cofactor biosynthesis; molybdopterin biosynthesis.</text>
</comment>
<comment type="subunit">
    <text evidence="1">Monomer and homodimer.</text>
</comment>
<comment type="similarity">
    <text evidence="1">Belongs to the radical SAM superfamily. MoaA family.</text>
</comment>